<organism>
    <name type="scientific">Chromobacterium violaceum (strain ATCC 12472 / DSM 30191 / JCM 1249 / CCUG 213 / NBRC 12614 / NCIMB 9131 / NCTC 9757 / MK)</name>
    <dbReference type="NCBI Taxonomy" id="243365"/>
    <lineage>
        <taxon>Bacteria</taxon>
        <taxon>Pseudomonadati</taxon>
        <taxon>Pseudomonadota</taxon>
        <taxon>Betaproteobacteria</taxon>
        <taxon>Neisseriales</taxon>
        <taxon>Chromobacteriaceae</taxon>
        <taxon>Chromobacterium</taxon>
    </lineage>
</organism>
<sequence>MSYELIAAKRVDLGTGASRRLRRAGKLPAVVYGAGKDAVSLELDHNTLYHAVKHADFHTSVLELVIDGQKEQVKVAAFQMHPYKQQVLHIDFARV</sequence>
<dbReference type="EMBL" id="AE016825">
    <property type="protein sequence ID" value="AAQ61717.1"/>
    <property type="molecule type" value="Genomic_DNA"/>
</dbReference>
<dbReference type="RefSeq" id="WP_011137604.1">
    <property type="nucleotide sequence ID" value="NC_005085.1"/>
</dbReference>
<dbReference type="SMR" id="Q7NQT0"/>
<dbReference type="STRING" id="243365.CV_4057"/>
<dbReference type="GeneID" id="66366484"/>
<dbReference type="KEGG" id="cvi:CV_4057"/>
<dbReference type="eggNOG" id="COG1825">
    <property type="taxonomic scope" value="Bacteria"/>
</dbReference>
<dbReference type="HOGENOM" id="CLU_137946_0_0_4"/>
<dbReference type="OrthoDB" id="9806411at2"/>
<dbReference type="Proteomes" id="UP000001424">
    <property type="component" value="Chromosome"/>
</dbReference>
<dbReference type="GO" id="GO:0022625">
    <property type="term" value="C:cytosolic large ribosomal subunit"/>
    <property type="evidence" value="ECO:0007669"/>
    <property type="project" value="TreeGrafter"/>
</dbReference>
<dbReference type="GO" id="GO:0008097">
    <property type="term" value="F:5S rRNA binding"/>
    <property type="evidence" value="ECO:0007669"/>
    <property type="project" value="InterPro"/>
</dbReference>
<dbReference type="GO" id="GO:0003735">
    <property type="term" value="F:structural constituent of ribosome"/>
    <property type="evidence" value="ECO:0007669"/>
    <property type="project" value="InterPro"/>
</dbReference>
<dbReference type="GO" id="GO:0006412">
    <property type="term" value="P:translation"/>
    <property type="evidence" value="ECO:0007669"/>
    <property type="project" value="UniProtKB-UniRule"/>
</dbReference>
<dbReference type="CDD" id="cd00495">
    <property type="entry name" value="Ribosomal_L25_TL5_CTC"/>
    <property type="match status" value="1"/>
</dbReference>
<dbReference type="FunFam" id="2.40.240.10:FF:000002">
    <property type="entry name" value="50S ribosomal protein L25"/>
    <property type="match status" value="1"/>
</dbReference>
<dbReference type="Gene3D" id="2.40.240.10">
    <property type="entry name" value="Ribosomal Protein L25, Chain P"/>
    <property type="match status" value="1"/>
</dbReference>
<dbReference type="HAMAP" id="MF_01336">
    <property type="entry name" value="Ribosomal_bL25"/>
    <property type="match status" value="1"/>
</dbReference>
<dbReference type="InterPro" id="IPR020056">
    <property type="entry name" value="Rbsml_bL25/Gln-tRNA_synth_N"/>
</dbReference>
<dbReference type="InterPro" id="IPR011035">
    <property type="entry name" value="Ribosomal_bL25/Gln-tRNA_synth"/>
</dbReference>
<dbReference type="InterPro" id="IPR001021">
    <property type="entry name" value="Ribosomal_bL25_long"/>
</dbReference>
<dbReference type="InterPro" id="IPR020055">
    <property type="entry name" value="Ribosomal_bL25_short"/>
</dbReference>
<dbReference type="InterPro" id="IPR029751">
    <property type="entry name" value="Ribosomal_L25_dom"/>
</dbReference>
<dbReference type="InterPro" id="IPR020930">
    <property type="entry name" value="Ribosomal_uL5_bac-type"/>
</dbReference>
<dbReference type="NCBIfam" id="TIGR00731">
    <property type="entry name" value="bL25_bact_ctc"/>
    <property type="match status" value="1"/>
</dbReference>
<dbReference type="NCBIfam" id="NF004612">
    <property type="entry name" value="PRK05943.1"/>
    <property type="match status" value="1"/>
</dbReference>
<dbReference type="PANTHER" id="PTHR33284">
    <property type="entry name" value="RIBOSOMAL PROTEIN L25/GLN-TRNA SYNTHETASE, ANTI-CODON-BINDING DOMAIN-CONTAINING PROTEIN"/>
    <property type="match status" value="1"/>
</dbReference>
<dbReference type="PANTHER" id="PTHR33284:SF1">
    <property type="entry name" value="RIBOSOMAL PROTEIN L25_GLN-TRNA SYNTHETASE, ANTI-CODON-BINDING DOMAIN-CONTAINING PROTEIN"/>
    <property type="match status" value="1"/>
</dbReference>
<dbReference type="Pfam" id="PF01386">
    <property type="entry name" value="Ribosomal_L25p"/>
    <property type="match status" value="1"/>
</dbReference>
<dbReference type="SUPFAM" id="SSF50715">
    <property type="entry name" value="Ribosomal protein L25-like"/>
    <property type="match status" value="1"/>
</dbReference>
<accession>Q7NQT0</accession>
<gene>
    <name evidence="1" type="primary">rplY</name>
    <name type="ordered locus">CV_4057</name>
</gene>
<feature type="chain" id="PRO_0000181477" description="Large ribosomal subunit protein bL25">
    <location>
        <begin position="1"/>
        <end position="95"/>
    </location>
</feature>
<name>RL25_CHRVO</name>
<keyword id="KW-1185">Reference proteome</keyword>
<keyword id="KW-0687">Ribonucleoprotein</keyword>
<keyword id="KW-0689">Ribosomal protein</keyword>
<keyword id="KW-0694">RNA-binding</keyword>
<keyword id="KW-0699">rRNA-binding</keyword>
<protein>
    <recommendedName>
        <fullName evidence="1">Large ribosomal subunit protein bL25</fullName>
    </recommendedName>
    <alternativeName>
        <fullName evidence="2">50S ribosomal protein L25</fullName>
    </alternativeName>
</protein>
<comment type="function">
    <text evidence="1">This is one of the proteins that binds to the 5S RNA in the ribosome where it forms part of the central protuberance.</text>
</comment>
<comment type="subunit">
    <text evidence="1">Part of the 50S ribosomal subunit; part of the 5S rRNA/L5/L18/L25 subcomplex. Contacts the 5S rRNA. Binds to the 5S rRNA independently of L5 and L18.</text>
</comment>
<comment type="similarity">
    <text evidence="1">Belongs to the bacterial ribosomal protein bL25 family.</text>
</comment>
<reference key="1">
    <citation type="journal article" date="2003" name="Proc. Natl. Acad. Sci. U.S.A.">
        <title>The complete genome sequence of Chromobacterium violaceum reveals remarkable and exploitable bacterial adaptability.</title>
        <authorList>
            <person name="Vasconcelos A.T.R."/>
            <person name="de Almeida D.F."/>
            <person name="Hungria M."/>
            <person name="Guimaraes C.T."/>
            <person name="Antonio R.V."/>
            <person name="Almeida F.C."/>
            <person name="de Almeida L.G.P."/>
            <person name="de Almeida R."/>
            <person name="Alves-Gomes J.A."/>
            <person name="Andrade E.M."/>
            <person name="Araripe J."/>
            <person name="de Araujo M.F.F."/>
            <person name="Astolfi-Filho S."/>
            <person name="Azevedo V."/>
            <person name="Baptista A.J."/>
            <person name="Bataus L.A.M."/>
            <person name="Batista J.S."/>
            <person name="Belo A."/>
            <person name="van den Berg C."/>
            <person name="Bogo M."/>
            <person name="Bonatto S."/>
            <person name="Bordignon J."/>
            <person name="Brigido M.M."/>
            <person name="Brito C.A."/>
            <person name="Brocchi M."/>
            <person name="Burity H.A."/>
            <person name="Camargo A.A."/>
            <person name="Cardoso D.D.P."/>
            <person name="Carneiro N.P."/>
            <person name="Carraro D.M."/>
            <person name="Carvalho C.M.B."/>
            <person name="Cascardo J.C.M."/>
            <person name="Cavada B.S."/>
            <person name="Chueire L.M.O."/>
            <person name="Creczynski-Pasa T.B."/>
            <person name="Cunha-Junior N.C."/>
            <person name="Fagundes N."/>
            <person name="Falcao C.L."/>
            <person name="Fantinatti F."/>
            <person name="Farias I.P."/>
            <person name="Felipe M.S.S."/>
            <person name="Ferrari L.P."/>
            <person name="Ferro J.A."/>
            <person name="Ferro M.I.T."/>
            <person name="Franco G.R."/>
            <person name="Freitas N.S.A."/>
            <person name="Furlan L.R."/>
            <person name="Gazzinelli R.T."/>
            <person name="Gomes E.A."/>
            <person name="Goncalves P.R."/>
            <person name="Grangeiro T.B."/>
            <person name="Grattapaglia D."/>
            <person name="Grisard E.C."/>
            <person name="Hanna E.S."/>
            <person name="Jardim S.N."/>
            <person name="Laurino J."/>
            <person name="Leoi L.C.T."/>
            <person name="Lima L.F.A."/>
            <person name="Loureiro M.F."/>
            <person name="Lyra M.C.C.P."/>
            <person name="Madeira H.M.F."/>
            <person name="Manfio G.P."/>
            <person name="Maranhao A.Q."/>
            <person name="Martins W.S."/>
            <person name="di Mauro S.M.Z."/>
            <person name="de Medeiros S.R.B."/>
            <person name="Meissner R.V."/>
            <person name="Moreira M.A.M."/>
            <person name="Nascimento F.F."/>
            <person name="Nicolas M.F."/>
            <person name="Oliveira J.G."/>
            <person name="Oliveira S.C."/>
            <person name="Paixao R.F.C."/>
            <person name="Parente J.A."/>
            <person name="Pedrosa F.O."/>
            <person name="Pena S.D.J."/>
            <person name="Pereira J.O."/>
            <person name="Pereira M."/>
            <person name="Pinto L.S.R.C."/>
            <person name="Pinto L.S."/>
            <person name="Porto J.I.R."/>
            <person name="Potrich D.P."/>
            <person name="Ramalho-Neto C.E."/>
            <person name="Reis A.M.M."/>
            <person name="Rigo L.U."/>
            <person name="Rondinelli E."/>
            <person name="Santos E.B.P."/>
            <person name="Santos F.R."/>
            <person name="Schneider M.P.C."/>
            <person name="Seuanez H.N."/>
            <person name="Silva A.M.R."/>
            <person name="da Silva A.L.C."/>
            <person name="Silva D.W."/>
            <person name="Silva R."/>
            <person name="Simoes I.C."/>
            <person name="Simon D."/>
            <person name="Soares C.M.A."/>
            <person name="Soares R.B.A."/>
            <person name="Souza E.M."/>
            <person name="Souza K.R.L."/>
            <person name="Souza R.C."/>
            <person name="Steffens M.B.R."/>
            <person name="Steindel M."/>
            <person name="Teixeira S.R."/>
            <person name="Urmenyi T."/>
            <person name="Vettore A."/>
            <person name="Wassem R."/>
            <person name="Zaha A."/>
            <person name="Simpson A.J.G."/>
        </authorList>
    </citation>
    <scope>NUCLEOTIDE SEQUENCE [LARGE SCALE GENOMIC DNA]</scope>
    <source>
        <strain>ATCC 12472 / DSM 30191 / JCM 1249 / CCUG 213 / NBRC 12614 / NCIMB 9131 / NCTC 9757 / MK</strain>
    </source>
</reference>
<evidence type="ECO:0000255" key="1">
    <source>
        <dbReference type="HAMAP-Rule" id="MF_01336"/>
    </source>
</evidence>
<evidence type="ECO:0000305" key="2"/>
<proteinExistence type="inferred from homology"/>